<feature type="chain" id="PRO_1000090243" description="Cobyric acid synthase">
    <location>
        <begin position="1"/>
        <end position="506"/>
    </location>
</feature>
<feature type="domain" description="GATase cobBQ-type" evidence="1">
    <location>
        <begin position="251"/>
        <end position="448"/>
    </location>
</feature>
<feature type="active site" description="Nucleophile" evidence="1">
    <location>
        <position position="332"/>
    </location>
</feature>
<feature type="active site" evidence="1">
    <location>
        <position position="440"/>
    </location>
</feature>
<proteinExistence type="inferred from homology"/>
<comment type="function">
    <text evidence="1">Catalyzes amidations at positions B, D, E, and G on adenosylcobyrinic A,C-diamide. NH(2) groups are provided by glutamine, and one molecule of ATP is hydrogenolyzed for each amidation.</text>
</comment>
<comment type="pathway">
    <text evidence="1">Cofactor biosynthesis; adenosylcobalamin biosynthesis.</text>
</comment>
<comment type="similarity">
    <text evidence="1">Belongs to the CobB/CobQ family. CobQ subfamily.</text>
</comment>
<protein>
    <recommendedName>
        <fullName evidence="1">Cobyric acid synthase</fullName>
    </recommendedName>
</protein>
<evidence type="ECO:0000255" key="1">
    <source>
        <dbReference type="HAMAP-Rule" id="MF_00028"/>
    </source>
</evidence>
<name>COBQ_SALA4</name>
<accession>B5EWY5</accession>
<reference key="1">
    <citation type="journal article" date="2011" name="J. Bacteriol.">
        <title>Comparative genomics of 28 Salmonella enterica isolates: evidence for CRISPR-mediated adaptive sublineage evolution.</title>
        <authorList>
            <person name="Fricke W.F."/>
            <person name="Mammel M.K."/>
            <person name="McDermott P.F."/>
            <person name="Tartera C."/>
            <person name="White D.G."/>
            <person name="Leclerc J.E."/>
            <person name="Ravel J."/>
            <person name="Cebula T.A."/>
        </authorList>
    </citation>
    <scope>NUCLEOTIDE SEQUENCE [LARGE SCALE GENOMIC DNA]</scope>
    <source>
        <strain>SL483</strain>
    </source>
</reference>
<sequence>MTQAVMLQGTASDVGKSVLAAGLCRIFYQDGLRTAPFKSQNMALNSGITPDGKEMGRAQIFQAEAAGITPDVRMNPVLLKPTSDRQAQVVLMGKVATNMDAVSYHDYKPRLREQILAVYNSLAQEYDVIVLEGAGSPAEINLRDRDIVNMGMAEMAQCPVILVADIDRGGVFAAIYGTLALLHKQERDRVKGVIINKFRGDVALLYSGIEQIESLTGVPVLGVMPWLDVDLEDEDGVALQNDKYRGNAPRDITIAIVQLPHISNFTDFNALAAQPDVRIRYIRRPEALTDADLVILPGSKNTLSDLAWLRESGMADAVLQTHRQGVPVMGICGGYQMLGDTIVDEVESGLGTQPGLGLLNAITRFAQDKTTTQVNATMSGELPGWLAAAAGLPVRGYEIHMGETVLQEGCCTAMTLQKNGCSVADGAVTADGLAFGTYLHGLFDSDAFTRAVVNGLRARKGLTPWETTFCYAEHKARQFDLLAEAMRQHIDIDKIYTIMQQHQEPV</sequence>
<keyword id="KW-0169">Cobalamin biosynthesis</keyword>
<keyword id="KW-0315">Glutamine amidotransferase</keyword>
<organism>
    <name type="scientific">Salmonella agona (strain SL483)</name>
    <dbReference type="NCBI Taxonomy" id="454166"/>
    <lineage>
        <taxon>Bacteria</taxon>
        <taxon>Pseudomonadati</taxon>
        <taxon>Pseudomonadota</taxon>
        <taxon>Gammaproteobacteria</taxon>
        <taxon>Enterobacterales</taxon>
        <taxon>Enterobacteriaceae</taxon>
        <taxon>Salmonella</taxon>
    </lineage>
</organism>
<dbReference type="EMBL" id="CP001138">
    <property type="protein sequence ID" value="ACH51493.1"/>
    <property type="molecule type" value="Genomic_DNA"/>
</dbReference>
<dbReference type="RefSeq" id="WP_000189654.1">
    <property type="nucleotide sequence ID" value="NC_011149.1"/>
</dbReference>
<dbReference type="KEGG" id="sea:SeAg_B2141"/>
<dbReference type="HOGENOM" id="CLU_019250_2_2_6"/>
<dbReference type="UniPathway" id="UPA00148"/>
<dbReference type="Proteomes" id="UP000008819">
    <property type="component" value="Chromosome"/>
</dbReference>
<dbReference type="GO" id="GO:0015420">
    <property type="term" value="F:ABC-type vitamin B12 transporter activity"/>
    <property type="evidence" value="ECO:0007669"/>
    <property type="project" value="UniProtKB-UniRule"/>
</dbReference>
<dbReference type="GO" id="GO:0003824">
    <property type="term" value="F:catalytic activity"/>
    <property type="evidence" value="ECO:0007669"/>
    <property type="project" value="InterPro"/>
</dbReference>
<dbReference type="GO" id="GO:0009236">
    <property type="term" value="P:cobalamin biosynthetic process"/>
    <property type="evidence" value="ECO:0007669"/>
    <property type="project" value="UniProtKB-UniRule"/>
</dbReference>
<dbReference type="CDD" id="cd05389">
    <property type="entry name" value="CobQ_N"/>
    <property type="match status" value="1"/>
</dbReference>
<dbReference type="CDD" id="cd01750">
    <property type="entry name" value="GATase1_CobQ"/>
    <property type="match status" value="1"/>
</dbReference>
<dbReference type="Gene3D" id="3.40.50.880">
    <property type="match status" value="1"/>
</dbReference>
<dbReference type="Gene3D" id="3.40.50.300">
    <property type="entry name" value="P-loop containing nucleotide triphosphate hydrolases"/>
    <property type="match status" value="1"/>
</dbReference>
<dbReference type="HAMAP" id="MF_00028">
    <property type="entry name" value="CobQ"/>
    <property type="match status" value="1"/>
</dbReference>
<dbReference type="InterPro" id="IPR029062">
    <property type="entry name" value="Class_I_gatase-like"/>
</dbReference>
<dbReference type="InterPro" id="IPR002586">
    <property type="entry name" value="CobQ/CobB/MinD/ParA_Nub-bd_dom"/>
</dbReference>
<dbReference type="InterPro" id="IPR033949">
    <property type="entry name" value="CobQ_GATase1"/>
</dbReference>
<dbReference type="InterPro" id="IPR047045">
    <property type="entry name" value="CobQ_N"/>
</dbReference>
<dbReference type="InterPro" id="IPR004459">
    <property type="entry name" value="CobQ_synth"/>
</dbReference>
<dbReference type="InterPro" id="IPR011698">
    <property type="entry name" value="GATase_3"/>
</dbReference>
<dbReference type="InterPro" id="IPR027417">
    <property type="entry name" value="P-loop_NTPase"/>
</dbReference>
<dbReference type="NCBIfam" id="TIGR00313">
    <property type="entry name" value="cobQ"/>
    <property type="match status" value="1"/>
</dbReference>
<dbReference type="NCBIfam" id="NF001989">
    <property type="entry name" value="PRK00784.1"/>
    <property type="match status" value="1"/>
</dbReference>
<dbReference type="PANTHER" id="PTHR21343:SF1">
    <property type="entry name" value="COBYRIC ACID SYNTHASE"/>
    <property type="match status" value="1"/>
</dbReference>
<dbReference type="PANTHER" id="PTHR21343">
    <property type="entry name" value="DETHIOBIOTIN SYNTHETASE"/>
    <property type="match status" value="1"/>
</dbReference>
<dbReference type="Pfam" id="PF01656">
    <property type="entry name" value="CbiA"/>
    <property type="match status" value="1"/>
</dbReference>
<dbReference type="Pfam" id="PF07685">
    <property type="entry name" value="GATase_3"/>
    <property type="match status" value="1"/>
</dbReference>
<dbReference type="SUPFAM" id="SSF52317">
    <property type="entry name" value="Class I glutamine amidotransferase-like"/>
    <property type="match status" value="1"/>
</dbReference>
<dbReference type="SUPFAM" id="SSF52540">
    <property type="entry name" value="P-loop containing nucleoside triphosphate hydrolases"/>
    <property type="match status" value="1"/>
</dbReference>
<dbReference type="PROSITE" id="PS51274">
    <property type="entry name" value="GATASE_COBBQ"/>
    <property type="match status" value="1"/>
</dbReference>
<gene>
    <name evidence="1" type="primary">cobQ</name>
    <name type="ordered locus">SeAg_B2141</name>
</gene>